<gene>
    <name type="primary">ZNF383</name>
    <name type="ORF">QtsA-18358</name>
</gene>
<reference key="1">
    <citation type="submission" date="2005-06" db="EMBL/GenBank/DDBJ databases">
        <title>DNA sequences of macaque genes expressed in brain or testis and its evolutionary implications.</title>
        <authorList>
            <consortium name="International consortium for macaque cDNA sequencing and analysis"/>
        </authorList>
    </citation>
    <scope>NUCLEOTIDE SEQUENCE [LARGE SCALE MRNA]</scope>
    <source>
        <tissue>Testis</tissue>
    </source>
</reference>
<organism>
    <name type="scientific">Macaca fascicularis</name>
    <name type="common">Crab-eating macaque</name>
    <name type="synonym">Cynomolgus monkey</name>
    <dbReference type="NCBI Taxonomy" id="9541"/>
    <lineage>
        <taxon>Eukaryota</taxon>
        <taxon>Metazoa</taxon>
        <taxon>Chordata</taxon>
        <taxon>Craniata</taxon>
        <taxon>Vertebrata</taxon>
        <taxon>Euteleostomi</taxon>
        <taxon>Mammalia</taxon>
        <taxon>Eutheria</taxon>
        <taxon>Euarchontoglires</taxon>
        <taxon>Primates</taxon>
        <taxon>Haplorrhini</taxon>
        <taxon>Catarrhini</taxon>
        <taxon>Cercopithecidae</taxon>
        <taxon>Cercopithecinae</taxon>
        <taxon>Macaca</taxon>
    </lineage>
</organism>
<keyword id="KW-0963">Cytoplasm</keyword>
<keyword id="KW-0238">DNA-binding</keyword>
<keyword id="KW-0479">Metal-binding</keyword>
<keyword id="KW-0539">Nucleus</keyword>
<keyword id="KW-1185">Reference proteome</keyword>
<keyword id="KW-0677">Repeat</keyword>
<keyword id="KW-0804">Transcription</keyword>
<keyword id="KW-0805">Transcription regulation</keyword>
<keyword id="KW-0862">Zinc</keyword>
<keyword id="KW-0863">Zinc-finger</keyword>
<name>ZN383_MACFA</name>
<proteinExistence type="evidence at transcript level"/>
<sequence>MAEGSVMFSDVSIDFSQEEWDCLDPVQRDLYRDVMLENYSNLVSMGLYTPKPQVISLLEQGKEPWMVGRELTRGLCSDLESMCETKLLSLKKEVYEIELCQREIMGLTKHGLEYSSFGDVLEYRSRLAKQLGYPNGHFSQEIFTPEYMPTFIQQTFLTLQQIMNNEDRPFECKKCGKAFSQNSQFIQHQRIHIGEKSYECKECGKFFSCGSHVTRHLKIHTGEKPFECKECGKAFSCSSYLSQHQRIHTGKKPYECKECGKAFSYCSNLIDHQRIHTGEKPYACKVCGKAFTKSSQLFQHVRIHTGEKPYECKECGKAFTQSSKLVQHQRIHTGEKPYECKECGKAFSSGSALTNHQRIHTGEKPYDCKECGKAFTQSSQLRQHQRIHAGEKPFECLECGKAFTQNSQLFQHQRIHTDEKPYECNECGKAFNKCSNLTRHLRIHTGEKPYNCKECGKAFSSGSDLIRHQGIHTNE</sequence>
<comment type="function">
    <text evidence="1">May function as a transcriptional repressor, suppressing transcriptional activities mediated by MAPK signaling pathways.</text>
</comment>
<comment type="subcellular location">
    <subcellularLocation>
        <location evidence="1">Nucleus</location>
    </subcellularLocation>
    <subcellularLocation>
        <location evidence="1">Cytoplasm</location>
    </subcellularLocation>
    <text evidence="1">Shuttling between the nucleus and cytoplasm may occur under different stimulation and growth conditions.</text>
</comment>
<comment type="domain">
    <text evidence="1">The KRAB domain is responsible for the transcriptional repressor activity.</text>
</comment>
<comment type="similarity">
    <text evidence="4">Belongs to the krueppel C2H2-type zinc-finger protein family.</text>
</comment>
<accession>Q4R6C2</accession>
<dbReference type="EMBL" id="AB169263">
    <property type="protein sequence ID" value="BAE01353.1"/>
    <property type="molecule type" value="mRNA"/>
</dbReference>
<dbReference type="RefSeq" id="NP_001271075.1">
    <property type="nucleotide sequence ID" value="NM_001284146.1"/>
</dbReference>
<dbReference type="RefSeq" id="XP_005589076.1">
    <property type="nucleotide sequence ID" value="XM_005589019.2"/>
</dbReference>
<dbReference type="RefSeq" id="XP_005589079.1">
    <property type="nucleotide sequence ID" value="XM_005589022.2"/>
</dbReference>
<dbReference type="RefSeq" id="XP_005589081.1">
    <property type="nucleotide sequence ID" value="XM_005589024.2"/>
</dbReference>
<dbReference type="RefSeq" id="XP_005589082.1">
    <property type="nucleotide sequence ID" value="XM_005589025.2"/>
</dbReference>
<dbReference type="RefSeq" id="XP_005589083.1">
    <property type="nucleotide sequence ID" value="XM_005589026.2"/>
</dbReference>
<dbReference type="RefSeq" id="XP_005589084.1">
    <property type="nucleotide sequence ID" value="XM_005589027.2"/>
</dbReference>
<dbReference type="RefSeq" id="XP_005589085.1">
    <property type="nucleotide sequence ID" value="XM_005589028.2"/>
</dbReference>
<dbReference type="RefSeq" id="XP_015296402.1">
    <property type="nucleotide sequence ID" value="XM_015440916.1"/>
</dbReference>
<dbReference type="RefSeq" id="XP_015296403.1">
    <property type="nucleotide sequence ID" value="XM_015440917.1"/>
</dbReference>
<dbReference type="RefSeq" id="XP_015296404.1">
    <property type="nucleotide sequence ID" value="XM_015440918.1"/>
</dbReference>
<dbReference type="RefSeq" id="XP_045237085.1">
    <property type="nucleotide sequence ID" value="XM_045381150.2"/>
</dbReference>
<dbReference type="RefSeq" id="XP_045237086.1">
    <property type="nucleotide sequence ID" value="XM_045381151.2"/>
</dbReference>
<dbReference type="RefSeq" id="XP_045237087.1">
    <property type="nucleotide sequence ID" value="XM_045381152.2"/>
</dbReference>
<dbReference type="RefSeq" id="XP_045237088.1">
    <property type="nucleotide sequence ID" value="XM_045381153.2"/>
</dbReference>
<dbReference type="RefSeq" id="XP_045237091.1">
    <property type="nucleotide sequence ID" value="XM_045381156.2"/>
</dbReference>
<dbReference type="RefSeq" id="XP_045237093.1">
    <property type="nucleotide sequence ID" value="XM_045381158.2"/>
</dbReference>
<dbReference type="RefSeq" id="XP_045237094.1">
    <property type="nucleotide sequence ID" value="XM_045381159.2"/>
</dbReference>
<dbReference type="RefSeq" id="XP_045237095.1">
    <property type="nucleotide sequence ID" value="XM_045381160.2"/>
</dbReference>
<dbReference type="RefSeq" id="XP_065392626.1">
    <property type="nucleotide sequence ID" value="XM_065536554.1"/>
</dbReference>
<dbReference type="RefSeq" id="XP_065392627.1">
    <property type="nucleotide sequence ID" value="XM_065536555.1"/>
</dbReference>
<dbReference type="RefSeq" id="XP_065392628.1">
    <property type="nucleotide sequence ID" value="XM_065536556.1"/>
</dbReference>
<dbReference type="SMR" id="Q4R6C2"/>
<dbReference type="STRING" id="9541.ENSMFAP00000043922"/>
<dbReference type="GeneID" id="101865100"/>
<dbReference type="VEuPathDB" id="HostDB:ENSMFAG00000039340"/>
<dbReference type="eggNOG" id="KOG1721">
    <property type="taxonomic scope" value="Eukaryota"/>
</dbReference>
<dbReference type="OMA" id="ESCQREM"/>
<dbReference type="Proteomes" id="UP000233100">
    <property type="component" value="Chromosome 19"/>
</dbReference>
<dbReference type="GO" id="GO:0000785">
    <property type="term" value="C:chromatin"/>
    <property type="evidence" value="ECO:0007669"/>
    <property type="project" value="TreeGrafter"/>
</dbReference>
<dbReference type="GO" id="GO:0005737">
    <property type="term" value="C:cytoplasm"/>
    <property type="evidence" value="ECO:0007669"/>
    <property type="project" value="UniProtKB-SubCell"/>
</dbReference>
<dbReference type="GO" id="GO:0031519">
    <property type="term" value="C:PcG protein complex"/>
    <property type="evidence" value="ECO:0007669"/>
    <property type="project" value="TreeGrafter"/>
</dbReference>
<dbReference type="GO" id="GO:0005667">
    <property type="term" value="C:transcription regulator complex"/>
    <property type="evidence" value="ECO:0007669"/>
    <property type="project" value="TreeGrafter"/>
</dbReference>
<dbReference type="GO" id="GO:0000981">
    <property type="term" value="F:DNA-binding transcription factor activity, RNA polymerase II-specific"/>
    <property type="evidence" value="ECO:0007669"/>
    <property type="project" value="TreeGrafter"/>
</dbReference>
<dbReference type="GO" id="GO:0000978">
    <property type="term" value="F:RNA polymerase II cis-regulatory region sequence-specific DNA binding"/>
    <property type="evidence" value="ECO:0007669"/>
    <property type="project" value="TreeGrafter"/>
</dbReference>
<dbReference type="GO" id="GO:0008270">
    <property type="term" value="F:zinc ion binding"/>
    <property type="evidence" value="ECO:0007669"/>
    <property type="project" value="UniProtKB-KW"/>
</dbReference>
<dbReference type="CDD" id="cd07765">
    <property type="entry name" value="KRAB_A-box"/>
    <property type="match status" value="1"/>
</dbReference>
<dbReference type="FunFam" id="3.30.160.60:FF:000800">
    <property type="entry name" value="zinc finger protein 181 isoform X2"/>
    <property type="match status" value="2"/>
</dbReference>
<dbReference type="FunFam" id="3.30.160.60:FF:000058">
    <property type="entry name" value="Zinc finger protein 2 homolog"/>
    <property type="match status" value="1"/>
</dbReference>
<dbReference type="FunFam" id="3.30.160.60:FF:000842">
    <property type="entry name" value="Zinc finger protein 383"/>
    <property type="match status" value="2"/>
</dbReference>
<dbReference type="FunFam" id="3.30.160.60:FF:000338">
    <property type="entry name" value="zinc finger protein 383"/>
    <property type="match status" value="2"/>
</dbReference>
<dbReference type="FunFam" id="3.30.160.60:FF:001026">
    <property type="entry name" value="zinc finger protein 383"/>
    <property type="match status" value="1"/>
</dbReference>
<dbReference type="FunFam" id="3.30.160.60:FF:002254">
    <property type="entry name" value="Zinc finger protein 540"/>
    <property type="match status" value="1"/>
</dbReference>
<dbReference type="FunFam" id="3.30.160.60:FF:000737">
    <property type="entry name" value="Zinc finger protein 565"/>
    <property type="match status" value="2"/>
</dbReference>
<dbReference type="Gene3D" id="6.10.140.140">
    <property type="match status" value="1"/>
</dbReference>
<dbReference type="Gene3D" id="3.30.160.60">
    <property type="entry name" value="Classic Zinc Finger"/>
    <property type="match status" value="11"/>
</dbReference>
<dbReference type="InterPro" id="IPR001909">
    <property type="entry name" value="KRAB"/>
</dbReference>
<dbReference type="InterPro" id="IPR036051">
    <property type="entry name" value="KRAB_dom_sf"/>
</dbReference>
<dbReference type="InterPro" id="IPR036236">
    <property type="entry name" value="Znf_C2H2_sf"/>
</dbReference>
<dbReference type="InterPro" id="IPR013087">
    <property type="entry name" value="Znf_C2H2_type"/>
</dbReference>
<dbReference type="PANTHER" id="PTHR14003">
    <property type="entry name" value="TRANSCRIPTIONAL REPRESSOR PROTEIN YY"/>
    <property type="match status" value="1"/>
</dbReference>
<dbReference type="PANTHER" id="PTHR14003:SF23">
    <property type="entry name" value="ZINC FINGER PROTEIN 143"/>
    <property type="match status" value="1"/>
</dbReference>
<dbReference type="Pfam" id="PF01352">
    <property type="entry name" value="KRAB"/>
    <property type="match status" value="1"/>
</dbReference>
<dbReference type="Pfam" id="PF00096">
    <property type="entry name" value="zf-C2H2"/>
    <property type="match status" value="8"/>
</dbReference>
<dbReference type="Pfam" id="PF13465">
    <property type="entry name" value="zf-H2C2_2"/>
    <property type="match status" value="1"/>
</dbReference>
<dbReference type="SMART" id="SM00349">
    <property type="entry name" value="KRAB"/>
    <property type="match status" value="1"/>
</dbReference>
<dbReference type="SMART" id="SM00355">
    <property type="entry name" value="ZnF_C2H2"/>
    <property type="match status" value="11"/>
</dbReference>
<dbReference type="SUPFAM" id="SSF57667">
    <property type="entry name" value="beta-beta-alpha zinc fingers"/>
    <property type="match status" value="6"/>
</dbReference>
<dbReference type="SUPFAM" id="SSF109640">
    <property type="entry name" value="KRAB domain (Kruppel-associated box)"/>
    <property type="match status" value="1"/>
</dbReference>
<dbReference type="PROSITE" id="PS50805">
    <property type="entry name" value="KRAB"/>
    <property type="match status" value="1"/>
</dbReference>
<dbReference type="PROSITE" id="PS00028">
    <property type="entry name" value="ZINC_FINGER_C2H2_1"/>
    <property type="match status" value="11"/>
</dbReference>
<dbReference type="PROSITE" id="PS50157">
    <property type="entry name" value="ZINC_FINGER_C2H2_2"/>
    <property type="match status" value="11"/>
</dbReference>
<feature type="chain" id="PRO_0000047551" description="Zinc finger protein 383">
    <location>
        <begin position="1"/>
        <end position="475"/>
    </location>
</feature>
<feature type="domain" description="KRAB" evidence="3">
    <location>
        <begin position="6"/>
        <end position="77"/>
    </location>
</feature>
<feature type="zinc finger region" description="C2H2-type 1" evidence="2">
    <location>
        <begin position="170"/>
        <end position="192"/>
    </location>
</feature>
<feature type="zinc finger region" description="C2H2-type 2" evidence="2">
    <location>
        <begin position="198"/>
        <end position="220"/>
    </location>
</feature>
<feature type="zinc finger region" description="C2H2-type 3" evidence="2">
    <location>
        <begin position="226"/>
        <end position="248"/>
    </location>
</feature>
<feature type="zinc finger region" description="C2H2-type 4" evidence="2">
    <location>
        <begin position="254"/>
        <end position="276"/>
    </location>
</feature>
<feature type="zinc finger region" description="C2H2-type 5" evidence="2">
    <location>
        <begin position="282"/>
        <end position="304"/>
    </location>
</feature>
<feature type="zinc finger region" description="C2H2-type 6" evidence="2">
    <location>
        <begin position="310"/>
        <end position="332"/>
    </location>
</feature>
<feature type="zinc finger region" description="C2H2-type 7" evidence="2">
    <location>
        <begin position="338"/>
        <end position="360"/>
    </location>
</feature>
<feature type="zinc finger region" description="C2H2-type 8" evidence="2">
    <location>
        <begin position="366"/>
        <end position="388"/>
    </location>
</feature>
<feature type="zinc finger region" description="C2H2-type 9" evidence="2">
    <location>
        <begin position="394"/>
        <end position="416"/>
    </location>
</feature>
<feature type="zinc finger region" description="C2H2-type 10" evidence="2">
    <location>
        <begin position="422"/>
        <end position="444"/>
    </location>
</feature>
<feature type="zinc finger region" description="C2H2-type 11" evidence="2">
    <location>
        <begin position="450"/>
        <end position="472"/>
    </location>
</feature>
<protein>
    <recommendedName>
        <fullName>Zinc finger protein 383</fullName>
    </recommendedName>
</protein>
<evidence type="ECO:0000250" key="1"/>
<evidence type="ECO:0000255" key="2">
    <source>
        <dbReference type="PROSITE-ProRule" id="PRU00042"/>
    </source>
</evidence>
<evidence type="ECO:0000255" key="3">
    <source>
        <dbReference type="PROSITE-ProRule" id="PRU00119"/>
    </source>
</evidence>
<evidence type="ECO:0000305" key="4"/>